<gene>
    <name evidence="1" type="primary">rpmE</name>
    <name type="ordered locus">NMA0495</name>
</gene>
<protein>
    <recommendedName>
        <fullName evidence="1">Large ribosomal subunit protein bL31</fullName>
    </recommendedName>
    <alternativeName>
        <fullName evidence="2">50S ribosomal protein L31</fullName>
    </alternativeName>
</protein>
<name>RL31_NEIMA</name>
<feature type="chain" id="PRO_0000173135" description="Large ribosomal subunit protein bL31">
    <location>
        <begin position="1"/>
        <end position="71"/>
    </location>
</feature>
<feature type="binding site" evidence="1">
    <location>
        <position position="16"/>
    </location>
    <ligand>
        <name>Zn(2+)</name>
        <dbReference type="ChEBI" id="CHEBI:29105"/>
    </ligand>
</feature>
<feature type="binding site" evidence="1">
    <location>
        <position position="18"/>
    </location>
    <ligand>
        <name>Zn(2+)</name>
        <dbReference type="ChEBI" id="CHEBI:29105"/>
    </ligand>
</feature>
<feature type="binding site" evidence="1">
    <location>
        <position position="38"/>
    </location>
    <ligand>
        <name>Zn(2+)</name>
        <dbReference type="ChEBI" id="CHEBI:29105"/>
    </ligand>
</feature>
<feature type="binding site" evidence="1">
    <location>
        <position position="41"/>
    </location>
    <ligand>
        <name>Zn(2+)</name>
        <dbReference type="ChEBI" id="CHEBI:29105"/>
    </ligand>
</feature>
<sequence length="71" mass="8118">MKQGIHPNYHEVNVTCSCGNKFATKSAMEKENFNIEVCSLCHPFYTGTQKIVDTTGRVDKFNNKFGNLFKR</sequence>
<accession>P66189</accession>
<accession>A1IPV3</accession>
<accession>Q9JR74</accession>
<organism>
    <name type="scientific">Neisseria meningitidis serogroup A / serotype 4A (strain DSM 15465 / Z2491)</name>
    <dbReference type="NCBI Taxonomy" id="122587"/>
    <lineage>
        <taxon>Bacteria</taxon>
        <taxon>Pseudomonadati</taxon>
        <taxon>Pseudomonadota</taxon>
        <taxon>Betaproteobacteria</taxon>
        <taxon>Neisseriales</taxon>
        <taxon>Neisseriaceae</taxon>
        <taxon>Neisseria</taxon>
    </lineage>
</organism>
<dbReference type="EMBL" id="AL157959">
    <property type="protein sequence ID" value="CAM07774.1"/>
    <property type="molecule type" value="Genomic_DNA"/>
</dbReference>
<dbReference type="RefSeq" id="WP_002218070.1">
    <property type="nucleotide sequence ID" value="NC_003116.1"/>
</dbReference>
<dbReference type="SMR" id="P66189"/>
<dbReference type="EnsemblBacteria" id="CAM07774">
    <property type="protein sequence ID" value="CAM07774"/>
    <property type="gene ID" value="NMA0495"/>
</dbReference>
<dbReference type="GeneID" id="93386863"/>
<dbReference type="KEGG" id="nma:NMA0495"/>
<dbReference type="HOGENOM" id="CLU_114306_4_0_4"/>
<dbReference type="Proteomes" id="UP000000626">
    <property type="component" value="Chromosome"/>
</dbReference>
<dbReference type="GO" id="GO:1990904">
    <property type="term" value="C:ribonucleoprotein complex"/>
    <property type="evidence" value="ECO:0007669"/>
    <property type="project" value="UniProtKB-KW"/>
</dbReference>
<dbReference type="GO" id="GO:0005840">
    <property type="term" value="C:ribosome"/>
    <property type="evidence" value="ECO:0007669"/>
    <property type="project" value="UniProtKB-KW"/>
</dbReference>
<dbReference type="GO" id="GO:0046872">
    <property type="term" value="F:metal ion binding"/>
    <property type="evidence" value="ECO:0007669"/>
    <property type="project" value="UniProtKB-KW"/>
</dbReference>
<dbReference type="GO" id="GO:0019843">
    <property type="term" value="F:rRNA binding"/>
    <property type="evidence" value="ECO:0007669"/>
    <property type="project" value="UniProtKB-KW"/>
</dbReference>
<dbReference type="GO" id="GO:0003735">
    <property type="term" value="F:structural constituent of ribosome"/>
    <property type="evidence" value="ECO:0007669"/>
    <property type="project" value="InterPro"/>
</dbReference>
<dbReference type="GO" id="GO:0006412">
    <property type="term" value="P:translation"/>
    <property type="evidence" value="ECO:0007669"/>
    <property type="project" value="UniProtKB-UniRule"/>
</dbReference>
<dbReference type="Gene3D" id="4.10.830.30">
    <property type="entry name" value="Ribosomal protein L31"/>
    <property type="match status" value="1"/>
</dbReference>
<dbReference type="HAMAP" id="MF_00501">
    <property type="entry name" value="Ribosomal_bL31_1"/>
    <property type="match status" value="1"/>
</dbReference>
<dbReference type="InterPro" id="IPR034704">
    <property type="entry name" value="Ribosomal_bL28/bL31-like_sf"/>
</dbReference>
<dbReference type="InterPro" id="IPR002150">
    <property type="entry name" value="Ribosomal_bL31"/>
</dbReference>
<dbReference type="InterPro" id="IPR027491">
    <property type="entry name" value="Ribosomal_bL31_A"/>
</dbReference>
<dbReference type="InterPro" id="IPR042105">
    <property type="entry name" value="Ribosomal_bL31_sf"/>
</dbReference>
<dbReference type="NCBIfam" id="TIGR00105">
    <property type="entry name" value="L31"/>
    <property type="match status" value="1"/>
</dbReference>
<dbReference type="NCBIfam" id="NF000612">
    <property type="entry name" value="PRK00019.1"/>
    <property type="match status" value="1"/>
</dbReference>
<dbReference type="NCBIfam" id="NF001809">
    <property type="entry name" value="PRK00528.1"/>
    <property type="match status" value="1"/>
</dbReference>
<dbReference type="PANTHER" id="PTHR33280">
    <property type="entry name" value="50S RIBOSOMAL PROTEIN L31, CHLOROPLASTIC"/>
    <property type="match status" value="1"/>
</dbReference>
<dbReference type="PANTHER" id="PTHR33280:SF6">
    <property type="entry name" value="LARGE RIBOSOMAL SUBUNIT PROTEIN BL31A"/>
    <property type="match status" value="1"/>
</dbReference>
<dbReference type="Pfam" id="PF01197">
    <property type="entry name" value="Ribosomal_L31"/>
    <property type="match status" value="1"/>
</dbReference>
<dbReference type="PRINTS" id="PR01249">
    <property type="entry name" value="RIBOSOMALL31"/>
</dbReference>
<dbReference type="SUPFAM" id="SSF143800">
    <property type="entry name" value="L28p-like"/>
    <property type="match status" value="1"/>
</dbReference>
<dbReference type="PROSITE" id="PS01143">
    <property type="entry name" value="RIBOSOMAL_L31"/>
    <property type="match status" value="1"/>
</dbReference>
<proteinExistence type="inferred from homology"/>
<comment type="function">
    <text evidence="1">Binds the 23S rRNA.</text>
</comment>
<comment type="cofactor">
    <cofactor evidence="1">
        <name>Zn(2+)</name>
        <dbReference type="ChEBI" id="CHEBI:29105"/>
    </cofactor>
    <text evidence="1">Binds 1 zinc ion per subunit.</text>
</comment>
<comment type="subunit">
    <text evidence="1">Part of the 50S ribosomal subunit.</text>
</comment>
<comment type="similarity">
    <text evidence="1">Belongs to the bacterial ribosomal protein bL31 family. Type A subfamily.</text>
</comment>
<reference key="1">
    <citation type="journal article" date="2000" name="Nature">
        <title>Complete DNA sequence of a serogroup A strain of Neisseria meningitidis Z2491.</title>
        <authorList>
            <person name="Parkhill J."/>
            <person name="Achtman M."/>
            <person name="James K.D."/>
            <person name="Bentley S.D."/>
            <person name="Churcher C.M."/>
            <person name="Klee S.R."/>
            <person name="Morelli G."/>
            <person name="Basham D."/>
            <person name="Brown D."/>
            <person name="Chillingworth T."/>
            <person name="Davies R.M."/>
            <person name="Davis P."/>
            <person name="Devlin K."/>
            <person name="Feltwell T."/>
            <person name="Hamlin N."/>
            <person name="Holroyd S."/>
            <person name="Jagels K."/>
            <person name="Leather S."/>
            <person name="Moule S."/>
            <person name="Mungall K.L."/>
            <person name="Quail M.A."/>
            <person name="Rajandream M.A."/>
            <person name="Rutherford K.M."/>
            <person name="Simmonds M."/>
            <person name="Skelton J."/>
            <person name="Whitehead S."/>
            <person name="Spratt B.G."/>
            <person name="Barrell B.G."/>
        </authorList>
    </citation>
    <scope>NUCLEOTIDE SEQUENCE [LARGE SCALE GENOMIC DNA]</scope>
    <source>
        <strain>DSM 15465 / Z2491</strain>
    </source>
</reference>
<keyword id="KW-0479">Metal-binding</keyword>
<keyword id="KW-0687">Ribonucleoprotein</keyword>
<keyword id="KW-0689">Ribosomal protein</keyword>
<keyword id="KW-0694">RNA-binding</keyword>
<keyword id="KW-0699">rRNA-binding</keyword>
<keyword id="KW-0862">Zinc</keyword>
<evidence type="ECO:0000255" key="1">
    <source>
        <dbReference type="HAMAP-Rule" id="MF_00501"/>
    </source>
</evidence>
<evidence type="ECO:0000305" key="2"/>